<reference key="1">
    <citation type="journal article" date="1987" name="Proc. Natl. Acad. Sci. U.S.A.">
        <title>Characterization of two members of the rho gene family from the yeast Saccharomyces cerevisiae.</title>
        <authorList>
            <person name="Madaule P."/>
            <person name="Axel R."/>
            <person name="Myers A.M."/>
        </authorList>
    </citation>
    <scope>NUCLEOTIDE SEQUENCE [GENOMIC DNA]</scope>
</reference>
<reference key="2">
    <citation type="journal article" date="2002" name="Nature">
        <title>Dissecting the architecture of a quantitative trait locus in yeast.</title>
        <authorList>
            <person name="Steinmetz L.M."/>
            <person name="Sinha H."/>
            <person name="Richards D.R."/>
            <person name="Spiegelman J.I."/>
            <person name="Oefner P.J."/>
            <person name="McCusker J.H."/>
            <person name="Davis R.W."/>
        </authorList>
    </citation>
    <scope>NUCLEOTIDE SEQUENCE [GENOMIC DNA]</scope>
    <source>
        <strain>S96</strain>
        <strain>SK1</strain>
        <strain>YJM 1129</strain>
        <strain>YJM 280</strain>
        <strain>YJM 320</strain>
        <strain>YJM 326</strain>
        <strain>YJM 339</strain>
        <strain>YJM 421</strain>
        <strain>YJM 627</strain>
    </source>
</reference>
<reference key="3">
    <citation type="journal article" date="2005" name="Nat. Genet.">
        <title>Quantitative trait loci mapped to single-nucleotide resolution in yeast.</title>
        <authorList>
            <person name="Deutschbauer A.M."/>
            <person name="Davis R.W."/>
        </authorList>
    </citation>
    <scope>NUCLEOTIDE SEQUENCE [GENOMIC DNA]</scope>
    <source>
        <strain>SK1</strain>
    </source>
</reference>
<reference key="4">
    <citation type="journal article" date="1996" name="Yeast">
        <title>The sequence of a 17,933 bp segment of Saccharomyces cerevisiae chromosome XIV contains the RHO2, TOP2, MKT1 and END3 genes and five new open reading frames.</title>
        <authorList>
            <person name="Soler-Mira A."/>
            <person name="Saiz J.E."/>
            <person name="Ballesta J.P.G."/>
            <person name="Remacha M.A."/>
        </authorList>
    </citation>
    <scope>NUCLEOTIDE SEQUENCE [GENOMIC DNA]</scope>
    <source>
        <strain>ATCC 96604 / S288c / FY1679</strain>
    </source>
</reference>
<reference key="5">
    <citation type="journal article" date="1997" name="Nature">
        <title>The nucleotide sequence of Saccharomyces cerevisiae chromosome XIV and its evolutionary implications.</title>
        <authorList>
            <person name="Philippsen P."/>
            <person name="Kleine K."/>
            <person name="Poehlmann R."/>
            <person name="Duesterhoeft A."/>
            <person name="Hamberg K."/>
            <person name="Hegemann J.H."/>
            <person name="Obermaier B."/>
            <person name="Urrestarazu L.A."/>
            <person name="Aert R."/>
            <person name="Albermann K."/>
            <person name="Altmann R."/>
            <person name="Andre B."/>
            <person name="Baladron V."/>
            <person name="Ballesta J.P.G."/>
            <person name="Becam A.-M."/>
            <person name="Beinhauer J.D."/>
            <person name="Boskovic J."/>
            <person name="Buitrago M.J."/>
            <person name="Bussereau F."/>
            <person name="Coster F."/>
            <person name="Crouzet M."/>
            <person name="D'Angelo M."/>
            <person name="Dal Pero F."/>
            <person name="De Antoni A."/>
            <person name="del Rey F."/>
            <person name="Doignon F."/>
            <person name="Domdey H."/>
            <person name="Dubois E."/>
            <person name="Fiedler T.A."/>
            <person name="Fleig U."/>
            <person name="Floeth M."/>
            <person name="Fritz C."/>
            <person name="Gaillardin C."/>
            <person name="Garcia-Cantalejo J.M."/>
            <person name="Glansdorff N."/>
            <person name="Goffeau A."/>
            <person name="Gueldener U."/>
            <person name="Herbert C.J."/>
            <person name="Heumann K."/>
            <person name="Heuss-Neitzel D."/>
            <person name="Hilbert H."/>
            <person name="Hinni K."/>
            <person name="Iraqui Houssaini I."/>
            <person name="Jacquet M."/>
            <person name="Jimenez A."/>
            <person name="Jonniaux J.-L."/>
            <person name="Karpfinger-Hartl L."/>
            <person name="Lanfranchi G."/>
            <person name="Lepingle A."/>
            <person name="Levesque H."/>
            <person name="Lyck R."/>
            <person name="Maftahi M."/>
            <person name="Mallet L."/>
            <person name="Maurer C.T.C."/>
            <person name="Messenguy F."/>
            <person name="Mewes H.-W."/>
            <person name="Moestl D."/>
            <person name="Nasr F."/>
            <person name="Nicaud J.-M."/>
            <person name="Niedenthal R.K."/>
            <person name="Pandolfo D."/>
            <person name="Pierard A."/>
            <person name="Piravandi E."/>
            <person name="Planta R.J."/>
            <person name="Pohl T.M."/>
            <person name="Purnelle B."/>
            <person name="Rebischung C."/>
            <person name="Remacha M.A."/>
            <person name="Revuelta J.L."/>
            <person name="Rinke M."/>
            <person name="Saiz J.E."/>
            <person name="Sartorello F."/>
            <person name="Scherens B."/>
            <person name="Sen-Gupta M."/>
            <person name="Soler-Mira A."/>
            <person name="Urbanus J.H.M."/>
            <person name="Valle G."/>
            <person name="Van Dyck L."/>
            <person name="Verhasselt P."/>
            <person name="Vierendeels F."/>
            <person name="Vissers S."/>
            <person name="Voet M."/>
            <person name="Volckaert G."/>
            <person name="Wach A."/>
            <person name="Wambutt R."/>
            <person name="Wedler H."/>
            <person name="Zollner A."/>
            <person name="Hani J."/>
        </authorList>
    </citation>
    <scope>NUCLEOTIDE SEQUENCE [LARGE SCALE GENOMIC DNA]</scope>
    <source>
        <strain>ATCC 204508 / S288c</strain>
    </source>
</reference>
<reference key="6">
    <citation type="journal article" date="2014" name="G3 (Bethesda)">
        <title>The reference genome sequence of Saccharomyces cerevisiae: Then and now.</title>
        <authorList>
            <person name="Engel S.R."/>
            <person name="Dietrich F.S."/>
            <person name="Fisk D.G."/>
            <person name="Binkley G."/>
            <person name="Balakrishnan R."/>
            <person name="Costanzo M.C."/>
            <person name="Dwight S.S."/>
            <person name="Hitz B.C."/>
            <person name="Karra K."/>
            <person name="Nash R.S."/>
            <person name="Weng S."/>
            <person name="Wong E.D."/>
            <person name="Lloyd P."/>
            <person name="Skrzypek M.S."/>
            <person name="Miyasato S.R."/>
            <person name="Simison M."/>
            <person name="Cherry J.M."/>
        </authorList>
    </citation>
    <scope>GENOME REANNOTATION</scope>
    <source>
        <strain>ATCC 204508 / S288c</strain>
    </source>
</reference>
<reference key="7">
    <citation type="journal article" date="1996" name="Mol. Cell. Biol.">
        <title>Identification of the bud emergence gene BEM4 and its interactions with rho-type GTPases in Saccharomyces cerevisiae.</title>
        <authorList>
            <person name="Mack D."/>
            <person name="Nishimura K."/>
            <person name="Dennehey B.K."/>
            <person name="Arbogast T."/>
            <person name="Parkinson J."/>
            <person name="Toh-e A."/>
            <person name="Pringle J.R."/>
            <person name="Bender A."/>
            <person name="Matsui Y."/>
        </authorList>
    </citation>
    <scope>INTERACTION WITH BEM4</scope>
</reference>
<reference key="8">
    <citation type="journal article" date="2003" name="Nature">
        <title>Global analysis of protein expression in yeast.</title>
        <authorList>
            <person name="Ghaemmaghami S."/>
            <person name="Huh W.-K."/>
            <person name="Bower K."/>
            <person name="Howson R.W."/>
            <person name="Belle A."/>
            <person name="Dephoure N."/>
            <person name="O'Shea E.K."/>
            <person name="Weissman J.S."/>
        </authorList>
    </citation>
    <scope>LEVEL OF PROTEIN EXPRESSION [LARGE SCALE ANALYSIS]</scope>
</reference>
<reference key="9">
    <citation type="journal article" date="2006" name="Cell">
        <title>Global analysis of protein palmitoylation in yeast.</title>
        <authorList>
            <person name="Roth A.F."/>
            <person name="Wan J."/>
            <person name="Bailey A.O."/>
            <person name="Sun B."/>
            <person name="Kuchar J.A."/>
            <person name="Green W.N."/>
            <person name="Phinney B.S."/>
            <person name="Yates J.R. III"/>
            <person name="Davis N.G."/>
        </authorList>
    </citation>
    <scope>PALMITOYLATION AT CYS-188</scope>
</reference>
<proteinExistence type="evidence at protein level"/>
<comment type="catalytic activity">
    <reaction evidence="2">
        <text>GTP + H2O = GDP + phosphate + H(+)</text>
        <dbReference type="Rhea" id="RHEA:19669"/>
        <dbReference type="ChEBI" id="CHEBI:15377"/>
        <dbReference type="ChEBI" id="CHEBI:15378"/>
        <dbReference type="ChEBI" id="CHEBI:37565"/>
        <dbReference type="ChEBI" id="CHEBI:43474"/>
        <dbReference type="ChEBI" id="CHEBI:58189"/>
        <dbReference type="EC" id="3.6.5.2"/>
    </reaction>
    <physiologicalReaction direction="left-to-right" evidence="2">
        <dbReference type="Rhea" id="RHEA:19670"/>
    </physiologicalReaction>
</comment>
<comment type="subunit">
    <text evidence="5">Interacts with BEM4.</text>
</comment>
<comment type="subcellular location">
    <subcellularLocation>
        <location evidence="6">Cell membrane</location>
        <topology evidence="6">Lipid-anchor</topology>
        <orientation evidence="6">Cytoplasmic side</orientation>
    </subcellularLocation>
</comment>
<comment type="miscellaneous">
    <text evidence="4">Present with 3870 molecules/cell in log phase SD medium.</text>
</comment>
<comment type="similarity">
    <text evidence="6">Belongs to the small GTPase superfamily. Rho family.</text>
</comment>
<evidence type="ECO:0000250" key="1"/>
<evidence type="ECO:0000250" key="2">
    <source>
        <dbReference type="UniProtKB" id="P61586"/>
    </source>
</evidence>
<evidence type="ECO:0000250" key="3">
    <source>
        <dbReference type="UniProtKB" id="P62745"/>
    </source>
</evidence>
<evidence type="ECO:0000269" key="4">
    <source>
    </source>
</evidence>
<evidence type="ECO:0000269" key="5">
    <source>
    </source>
</evidence>
<evidence type="ECO:0000305" key="6"/>
<evidence type="ECO:0000305" key="7">
    <source>
    </source>
</evidence>
<dbReference type="EC" id="3.6.5.2" evidence="2"/>
<dbReference type="EMBL" id="M15190">
    <property type="protein sequence ID" value="AAA34978.1"/>
    <property type="molecule type" value="Genomic_DNA"/>
</dbReference>
<dbReference type="EMBL" id="AF458969">
    <property type="protein sequence ID" value="AAM00517.1"/>
    <property type="molecule type" value="Genomic_DNA"/>
</dbReference>
<dbReference type="EMBL" id="AF458970">
    <property type="protein sequence ID" value="AAM00523.1"/>
    <property type="molecule type" value="Genomic_DNA"/>
</dbReference>
<dbReference type="EMBL" id="AF458971">
    <property type="protein sequence ID" value="AAM00529.1"/>
    <property type="molecule type" value="Genomic_DNA"/>
</dbReference>
<dbReference type="EMBL" id="AF458972">
    <property type="protein sequence ID" value="AAM00535.1"/>
    <property type="molecule type" value="Genomic_DNA"/>
</dbReference>
<dbReference type="EMBL" id="AF458973">
    <property type="protein sequence ID" value="AAM00541.1"/>
    <property type="molecule type" value="Genomic_DNA"/>
</dbReference>
<dbReference type="EMBL" id="AF458974">
    <property type="protein sequence ID" value="AAM00547.1"/>
    <property type="molecule type" value="Genomic_DNA"/>
</dbReference>
<dbReference type="EMBL" id="AF458976">
    <property type="protein sequence ID" value="AAM00559.1"/>
    <property type="molecule type" value="Genomic_DNA"/>
</dbReference>
<dbReference type="EMBL" id="AF458978">
    <property type="protein sequence ID" value="AAM00571.1"/>
    <property type="molecule type" value="Genomic_DNA"/>
</dbReference>
<dbReference type="EMBL" id="AF458981">
    <property type="protein sequence ID" value="AAM00589.1"/>
    <property type="molecule type" value="Genomic_DNA"/>
</dbReference>
<dbReference type="EMBL" id="DQ115393">
    <property type="protein sequence ID" value="AAZ22518.1"/>
    <property type="molecule type" value="Genomic_DNA"/>
</dbReference>
<dbReference type="EMBL" id="X89016">
    <property type="protein sequence ID" value="CAA61421.1"/>
    <property type="molecule type" value="Genomic_DNA"/>
</dbReference>
<dbReference type="EMBL" id="Z71366">
    <property type="protein sequence ID" value="CAA95965.1"/>
    <property type="molecule type" value="Genomic_DNA"/>
</dbReference>
<dbReference type="EMBL" id="BK006947">
    <property type="protein sequence ID" value="DAA10456.1"/>
    <property type="molecule type" value="Genomic_DNA"/>
</dbReference>
<dbReference type="PIR" id="S57533">
    <property type="entry name" value="TVBYH2"/>
</dbReference>
<dbReference type="RefSeq" id="NP_014309.3">
    <property type="nucleotide sequence ID" value="NM_001182928.3"/>
</dbReference>
<dbReference type="SMR" id="P06781"/>
<dbReference type="BioGRID" id="35734">
    <property type="interactions" value="165"/>
</dbReference>
<dbReference type="DIP" id="DIP-5750N"/>
<dbReference type="FunCoup" id="P06781">
    <property type="interactions" value="208"/>
</dbReference>
<dbReference type="IntAct" id="P06781">
    <property type="interactions" value="14"/>
</dbReference>
<dbReference type="STRING" id="4932.YNL090W"/>
<dbReference type="iPTMnet" id="P06781"/>
<dbReference type="SwissPalm" id="P06781"/>
<dbReference type="PaxDb" id="4932-YNL090W"/>
<dbReference type="PeptideAtlas" id="P06781"/>
<dbReference type="EnsemblFungi" id="YNL090W_mRNA">
    <property type="protein sequence ID" value="YNL090W"/>
    <property type="gene ID" value="YNL090W"/>
</dbReference>
<dbReference type="GeneID" id="855634"/>
<dbReference type="KEGG" id="sce:YNL090W"/>
<dbReference type="AGR" id="SGD:S000005034"/>
<dbReference type="SGD" id="S000005034">
    <property type="gene designation" value="RHO2"/>
</dbReference>
<dbReference type="VEuPathDB" id="FungiDB:YNL090W"/>
<dbReference type="eggNOG" id="KOG0393">
    <property type="taxonomic scope" value="Eukaryota"/>
</dbReference>
<dbReference type="HOGENOM" id="CLU_041217_21_2_1"/>
<dbReference type="InParanoid" id="P06781"/>
<dbReference type="OMA" id="NDNVMRR"/>
<dbReference type="OrthoDB" id="8830751at2759"/>
<dbReference type="BioCyc" id="YEAST:G3O-33118-MONOMER"/>
<dbReference type="Reactome" id="R-SCE-416482">
    <property type="pathway name" value="G alpha (12/13) signalling events"/>
</dbReference>
<dbReference type="Reactome" id="R-SCE-5625740">
    <property type="pathway name" value="RHO GTPases activate PKNs"/>
</dbReference>
<dbReference type="Reactome" id="R-SCE-6798695">
    <property type="pathway name" value="Neutrophil degranulation"/>
</dbReference>
<dbReference type="Reactome" id="R-SCE-9013026">
    <property type="pathway name" value="RHOB GTPase cycle"/>
</dbReference>
<dbReference type="Reactome" id="R-SCE-9013106">
    <property type="pathway name" value="RHOC GTPase cycle"/>
</dbReference>
<dbReference type="Reactome" id="R-SCE-9013405">
    <property type="pathway name" value="RHOD GTPase cycle"/>
</dbReference>
<dbReference type="Reactome" id="R-SCE-9035034">
    <property type="pathway name" value="RHOF GTPase cycle"/>
</dbReference>
<dbReference type="Reactome" id="R-SCE-9696264">
    <property type="pathway name" value="RND3 GTPase cycle"/>
</dbReference>
<dbReference type="Reactome" id="R-SCE-9696270">
    <property type="pathway name" value="RND2 GTPase cycle"/>
</dbReference>
<dbReference type="Reactome" id="R-SCE-9696273">
    <property type="pathway name" value="RND1 GTPase cycle"/>
</dbReference>
<dbReference type="BioGRID-ORCS" id="855634">
    <property type="hits" value="0 hits in 10 CRISPR screens"/>
</dbReference>
<dbReference type="PRO" id="PR:P06781"/>
<dbReference type="Proteomes" id="UP000002311">
    <property type="component" value="Chromosome XIV"/>
</dbReference>
<dbReference type="RNAct" id="P06781">
    <property type="molecule type" value="protein"/>
</dbReference>
<dbReference type="GO" id="GO:0071944">
    <property type="term" value="C:cell periphery"/>
    <property type="evidence" value="ECO:0007005"/>
    <property type="project" value="SGD"/>
</dbReference>
<dbReference type="GO" id="GO:0005829">
    <property type="term" value="C:cytosol"/>
    <property type="evidence" value="ECO:0000318"/>
    <property type="project" value="GO_Central"/>
</dbReference>
<dbReference type="GO" id="GO:0016020">
    <property type="term" value="C:membrane"/>
    <property type="evidence" value="ECO:0000314"/>
    <property type="project" value="SGD"/>
</dbReference>
<dbReference type="GO" id="GO:0005886">
    <property type="term" value="C:plasma membrane"/>
    <property type="evidence" value="ECO:0000318"/>
    <property type="project" value="GO_Central"/>
</dbReference>
<dbReference type="GO" id="GO:0005525">
    <property type="term" value="F:GTP binding"/>
    <property type="evidence" value="ECO:0000318"/>
    <property type="project" value="GO_Central"/>
</dbReference>
<dbReference type="GO" id="GO:0003924">
    <property type="term" value="F:GTPase activity"/>
    <property type="evidence" value="ECO:0000314"/>
    <property type="project" value="SGD"/>
</dbReference>
<dbReference type="GO" id="GO:0019901">
    <property type="term" value="F:protein kinase binding"/>
    <property type="evidence" value="ECO:0000318"/>
    <property type="project" value="GO_Central"/>
</dbReference>
<dbReference type="GO" id="GO:0007015">
    <property type="term" value="P:actin filament organization"/>
    <property type="evidence" value="ECO:0000318"/>
    <property type="project" value="GO_Central"/>
</dbReference>
<dbReference type="GO" id="GO:0030010">
    <property type="term" value="P:establishment of cell polarity"/>
    <property type="evidence" value="ECO:0000304"/>
    <property type="project" value="SGD"/>
</dbReference>
<dbReference type="GO" id="GO:0031505">
    <property type="term" value="P:fungal-type cell wall organization"/>
    <property type="evidence" value="ECO:0000304"/>
    <property type="project" value="SGD"/>
</dbReference>
<dbReference type="GO" id="GO:0007017">
    <property type="term" value="P:microtubule-based process"/>
    <property type="evidence" value="ECO:0000304"/>
    <property type="project" value="SGD"/>
</dbReference>
<dbReference type="GO" id="GO:0032956">
    <property type="term" value="P:regulation of actin cytoskeleton organization"/>
    <property type="evidence" value="ECO:0000318"/>
    <property type="project" value="GO_Central"/>
</dbReference>
<dbReference type="GO" id="GO:0007165">
    <property type="term" value="P:signal transduction"/>
    <property type="evidence" value="ECO:0000318"/>
    <property type="project" value="GO_Central"/>
</dbReference>
<dbReference type="GO" id="GO:0007264">
    <property type="term" value="P:small GTPase-mediated signal transduction"/>
    <property type="evidence" value="ECO:0000304"/>
    <property type="project" value="SGD"/>
</dbReference>
<dbReference type="CDD" id="cd04129">
    <property type="entry name" value="Rho2"/>
    <property type="match status" value="1"/>
</dbReference>
<dbReference type="FunFam" id="3.40.50.300:FF:000573">
    <property type="entry name" value="RHO family GTPase Rho2"/>
    <property type="match status" value="1"/>
</dbReference>
<dbReference type="Gene3D" id="3.40.50.300">
    <property type="entry name" value="P-loop containing nucleotide triphosphate hydrolases"/>
    <property type="match status" value="1"/>
</dbReference>
<dbReference type="InterPro" id="IPR027417">
    <property type="entry name" value="P-loop_NTPase"/>
</dbReference>
<dbReference type="InterPro" id="IPR005225">
    <property type="entry name" value="Small_GTP-bd"/>
</dbReference>
<dbReference type="InterPro" id="IPR001806">
    <property type="entry name" value="Small_GTPase"/>
</dbReference>
<dbReference type="InterPro" id="IPR003578">
    <property type="entry name" value="Small_GTPase_Rho"/>
</dbReference>
<dbReference type="NCBIfam" id="TIGR00231">
    <property type="entry name" value="small_GTP"/>
    <property type="match status" value="1"/>
</dbReference>
<dbReference type="PANTHER" id="PTHR24072">
    <property type="entry name" value="RHO FAMILY GTPASE"/>
    <property type="match status" value="1"/>
</dbReference>
<dbReference type="Pfam" id="PF00071">
    <property type="entry name" value="Ras"/>
    <property type="match status" value="1"/>
</dbReference>
<dbReference type="PRINTS" id="PR00449">
    <property type="entry name" value="RASTRNSFRMNG"/>
</dbReference>
<dbReference type="SMART" id="SM00175">
    <property type="entry name" value="RAB"/>
    <property type="match status" value="1"/>
</dbReference>
<dbReference type="SMART" id="SM00173">
    <property type="entry name" value="RAS"/>
    <property type="match status" value="1"/>
</dbReference>
<dbReference type="SMART" id="SM00174">
    <property type="entry name" value="RHO"/>
    <property type="match status" value="1"/>
</dbReference>
<dbReference type="SUPFAM" id="SSF52540">
    <property type="entry name" value="P-loop containing nucleoside triphosphate hydrolases"/>
    <property type="match status" value="1"/>
</dbReference>
<dbReference type="PROSITE" id="PS51420">
    <property type="entry name" value="RHO"/>
    <property type="match status" value="1"/>
</dbReference>
<protein>
    <recommendedName>
        <fullName>GTP-binding protein RHO2</fullName>
        <ecNumber evidence="2">3.6.5.2</ecNumber>
    </recommendedName>
</protein>
<name>RHO2_YEAST</name>
<sequence length="192" mass="21479">MSEKAVRRKLVIIGDGACGKTSLLYVFTLGKFPEQYHPTVFENYVTDCRVDGIKVSLTLWDTAGQEEYERLRPFSYSKADIILIGFAVDNFESLINARTKWADEALRYCPDAPIVLVGLKKDLRQEAHFKENATDEMVPIEDAKQVARAIGAKKYMECSALTGEGVDDVFEVATRTSLLMKKEPGANCCIIL</sequence>
<gene>
    <name type="primary">RHO2</name>
    <name type="ordered locus">YNL090W</name>
    <name type="ORF">N2237</name>
</gene>
<organism>
    <name type="scientific">Saccharomyces cerevisiae (strain ATCC 204508 / S288c)</name>
    <name type="common">Baker's yeast</name>
    <dbReference type="NCBI Taxonomy" id="559292"/>
    <lineage>
        <taxon>Eukaryota</taxon>
        <taxon>Fungi</taxon>
        <taxon>Dikarya</taxon>
        <taxon>Ascomycota</taxon>
        <taxon>Saccharomycotina</taxon>
        <taxon>Saccharomycetes</taxon>
        <taxon>Saccharomycetales</taxon>
        <taxon>Saccharomycetaceae</taxon>
        <taxon>Saccharomyces</taxon>
    </lineage>
</organism>
<accession>P06781</accession>
<accession>D6W190</accession>
<accession>Q45TZ2</accession>
<keyword id="KW-1003">Cell membrane</keyword>
<keyword id="KW-0342">GTP-binding</keyword>
<keyword id="KW-0378">Hydrolase</keyword>
<keyword id="KW-0449">Lipoprotein</keyword>
<keyword id="KW-0472">Membrane</keyword>
<keyword id="KW-0488">Methylation</keyword>
<keyword id="KW-0547">Nucleotide-binding</keyword>
<keyword id="KW-0564">Palmitate</keyword>
<keyword id="KW-0636">Prenylation</keyword>
<keyword id="KW-1185">Reference proteome</keyword>
<feature type="chain" id="PRO_0000198946" description="GTP-binding protein RHO2">
    <location>
        <begin position="1"/>
        <end position="189"/>
    </location>
</feature>
<feature type="propeptide" id="PRO_0000281276" description="Removed in mature form" evidence="1">
    <location>
        <begin position="190"/>
        <end position="192"/>
    </location>
</feature>
<feature type="short sequence motif" description="Effector region" evidence="1">
    <location>
        <begin position="36"/>
        <end position="44"/>
    </location>
</feature>
<feature type="binding site" evidence="2">
    <location>
        <begin position="14"/>
        <end position="21"/>
    </location>
    <ligand>
        <name>GTP</name>
        <dbReference type="ChEBI" id="CHEBI:37565"/>
    </ligand>
</feature>
<feature type="binding site" evidence="1">
    <location>
        <begin position="61"/>
        <end position="65"/>
    </location>
    <ligand>
        <name>GTP</name>
        <dbReference type="ChEBI" id="CHEBI:37565"/>
    </ligand>
</feature>
<feature type="binding site" evidence="2">
    <location>
        <begin position="119"/>
        <end position="122"/>
    </location>
    <ligand>
        <name>GTP</name>
        <dbReference type="ChEBI" id="CHEBI:37565"/>
    </ligand>
</feature>
<feature type="modified residue" description="Cysteine methyl ester" evidence="3">
    <location>
        <position position="189"/>
    </location>
</feature>
<feature type="lipid moiety-binding region" description="S-palmitoyl cysteine" evidence="7">
    <location>
        <position position="188"/>
    </location>
</feature>
<feature type="lipid moiety-binding region" description="S-geranylgeranyl cysteine" evidence="3">
    <location>
        <position position="189"/>
    </location>
</feature>
<feature type="sequence conflict" description="In Ref. 1; AAA34978." evidence="6" ref="1">
    <original>C</original>
    <variation>S</variation>
    <location>
        <position position="48"/>
    </location>
</feature>